<proteinExistence type="evidence at protein level"/>
<organism>
    <name type="scientific">Methanocaldococcus jannaschii (strain ATCC 43067 / DSM 2661 / JAL-1 / JCM 10045 / NBRC 100440)</name>
    <name type="common">Methanococcus jannaschii</name>
    <dbReference type="NCBI Taxonomy" id="243232"/>
    <lineage>
        <taxon>Archaea</taxon>
        <taxon>Methanobacteriati</taxon>
        <taxon>Methanobacteriota</taxon>
        <taxon>Methanomada group</taxon>
        <taxon>Methanococci</taxon>
        <taxon>Methanococcales</taxon>
        <taxon>Methanocaldococcaceae</taxon>
        <taxon>Methanocaldococcus</taxon>
    </lineage>
</organism>
<accession>Q58625</accession>
<protein>
    <recommendedName>
        <fullName>Translation initiation factor 5A</fullName>
    </recommendedName>
    <alternativeName>
        <fullName>Hypusine-containing protein</fullName>
    </alternativeName>
    <alternativeName>
        <fullName>eIF-5A</fullName>
    </alternativeName>
</protein>
<sequence length="132" mass="14180">MPGTKQVNVGSLKVGQYVMIDGVPCEIVDISVSKPGKHGGAKARVVGIGIFEKVKKEFVAPTSSKVEVPIIDRRKGQVLAIMGDMVQIMDLQTYETLELPIPEGIEGLEPGGEVEYIEAVGQYKITRVIGGK</sequence>
<dbReference type="EMBL" id="L77117">
    <property type="protein sequence ID" value="AAB99231.1"/>
    <property type="molecule type" value="Genomic_DNA"/>
</dbReference>
<dbReference type="RefSeq" id="WP_010870740.1">
    <property type="nucleotide sequence ID" value="NC_000909.1"/>
</dbReference>
<dbReference type="PDB" id="1EIF">
    <property type="method" value="X-ray"/>
    <property type="resolution" value="1.90 A"/>
    <property type="chains" value="A=1-132"/>
</dbReference>
<dbReference type="PDB" id="2EIF">
    <property type="method" value="X-ray"/>
    <property type="resolution" value="1.80 A"/>
    <property type="chains" value="A=1-132"/>
</dbReference>
<dbReference type="PDBsum" id="1EIF"/>
<dbReference type="PDBsum" id="2EIF"/>
<dbReference type="SMR" id="Q58625"/>
<dbReference type="FunCoup" id="Q58625">
    <property type="interactions" value="120"/>
</dbReference>
<dbReference type="STRING" id="243232.MJ_1228"/>
<dbReference type="PaxDb" id="243232-MJ_1228"/>
<dbReference type="EnsemblBacteria" id="AAB99231">
    <property type="protein sequence ID" value="AAB99231"/>
    <property type="gene ID" value="MJ_1228"/>
</dbReference>
<dbReference type="GeneID" id="1452124"/>
<dbReference type="KEGG" id="mja:MJ_1228"/>
<dbReference type="eggNOG" id="arCOG04277">
    <property type="taxonomic scope" value="Archaea"/>
</dbReference>
<dbReference type="HOGENOM" id="CLU_102600_3_0_2"/>
<dbReference type="InParanoid" id="Q58625"/>
<dbReference type="OrthoDB" id="23689at2157"/>
<dbReference type="PhylomeDB" id="Q58625"/>
<dbReference type="EvolutionaryTrace" id="Q58625"/>
<dbReference type="Proteomes" id="UP000000805">
    <property type="component" value="Chromosome"/>
</dbReference>
<dbReference type="GO" id="GO:0005737">
    <property type="term" value="C:cytoplasm"/>
    <property type="evidence" value="ECO:0007669"/>
    <property type="project" value="UniProtKB-SubCell"/>
</dbReference>
<dbReference type="GO" id="GO:0043022">
    <property type="term" value="F:ribosome binding"/>
    <property type="evidence" value="ECO:0007669"/>
    <property type="project" value="InterPro"/>
</dbReference>
<dbReference type="GO" id="GO:0003723">
    <property type="term" value="F:RNA binding"/>
    <property type="evidence" value="ECO:0007669"/>
    <property type="project" value="InterPro"/>
</dbReference>
<dbReference type="GO" id="GO:0003746">
    <property type="term" value="F:translation elongation factor activity"/>
    <property type="evidence" value="ECO:0000318"/>
    <property type="project" value="GO_Central"/>
</dbReference>
<dbReference type="GO" id="GO:0003743">
    <property type="term" value="F:translation initiation factor activity"/>
    <property type="evidence" value="ECO:0007669"/>
    <property type="project" value="UniProtKB-UniRule"/>
</dbReference>
<dbReference type="GO" id="GO:0045901">
    <property type="term" value="P:positive regulation of translational elongation"/>
    <property type="evidence" value="ECO:0007669"/>
    <property type="project" value="InterPro"/>
</dbReference>
<dbReference type="GO" id="GO:0045905">
    <property type="term" value="P:positive regulation of translational termination"/>
    <property type="evidence" value="ECO:0007669"/>
    <property type="project" value="InterPro"/>
</dbReference>
<dbReference type="GO" id="GO:0006414">
    <property type="term" value="P:translational elongation"/>
    <property type="evidence" value="ECO:0000318"/>
    <property type="project" value="GO_Central"/>
</dbReference>
<dbReference type="CDD" id="cd04467">
    <property type="entry name" value="S1_aIF5A"/>
    <property type="match status" value="1"/>
</dbReference>
<dbReference type="FunFam" id="2.30.30.30:FF:000038">
    <property type="entry name" value="Translation initiation factor 5A"/>
    <property type="match status" value="1"/>
</dbReference>
<dbReference type="FunFam" id="2.40.50.140:FF:000334">
    <property type="entry name" value="Translation initiation factor 5A"/>
    <property type="match status" value="1"/>
</dbReference>
<dbReference type="Gene3D" id="2.30.30.30">
    <property type="match status" value="1"/>
</dbReference>
<dbReference type="Gene3D" id="2.40.50.140">
    <property type="entry name" value="Nucleic acid-binding proteins"/>
    <property type="match status" value="1"/>
</dbReference>
<dbReference type="HAMAP" id="MF_00085">
    <property type="entry name" value="eIF_5A"/>
    <property type="match status" value="1"/>
</dbReference>
<dbReference type="InterPro" id="IPR001884">
    <property type="entry name" value="IF5A-like"/>
</dbReference>
<dbReference type="InterPro" id="IPR048670">
    <property type="entry name" value="IF5A-like_N"/>
</dbReference>
<dbReference type="InterPro" id="IPR012340">
    <property type="entry name" value="NA-bd_OB-fold"/>
</dbReference>
<dbReference type="InterPro" id="IPR014722">
    <property type="entry name" value="Rib_uL2_dom2"/>
</dbReference>
<dbReference type="InterPro" id="IPR019769">
    <property type="entry name" value="Trans_elong_IF5A_hypusine_site"/>
</dbReference>
<dbReference type="InterPro" id="IPR022847">
    <property type="entry name" value="Transl_elong_IF5A_arc"/>
</dbReference>
<dbReference type="InterPro" id="IPR020189">
    <property type="entry name" value="Transl_elong_IF5A_C"/>
</dbReference>
<dbReference type="InterPro" id="IPR008991">
    <property type="entry name" value="Translation_prot_SH3-like_sf"/>
</dbReference>
<dbReference type="NCBIfam" id="TIGR00037">
    <property type="entry name" value="eIF_5A"/>
    <property type="match status" value="1"/>
</dbReference>
<dbReference type="NCBIfam" id="NF003076">
    <property type="entry name" value="PRK03999.1"/>
    <property type="match status" value="1"/>
</dbReference>
<dbReference type="PANTHER" id="PTHR11673">
    <property type="entry name" value="TRANSLATION INITIATION FACTOR 5A FAMILY MEMBER"/>
    <property type="match status" value="1"/>
</dbReference>
<dbReference type="Pfam" id="PF01287">
    <property type="entry name" value="eIF-5a"/>
    <property type="match status" value="1"/>
</dbReference>
<dbReference type="Pfam" id="PF21485">
    <property type="entry name" value="IF5A-like_N"/>
    <property type="match status" value="1"/>
</dbReference>
<dbReference type="PIRSF" id="PIRSF003025">
    <property type="entry name" value="eIF5A"/>
    <property type="match status" value="1"/>
</dbReference>
<dbReference type="SMART" id="SM01376">
    <property type="entry name" value="eIF-5a"/>
    <property type="match status" value="1"/>
</dbReference>
<dbReference type="SUPFAM" id="SSF50249">
    <property type="entry name" value="Nucleic acid-binding proteins"/>
    <property type="match status" value="1"/>
</dbReference>
<dbReference type="SUPFAM" id="SSF50104">
    <property type="entry name" value="Translation proteins SH3-like domain"/>
    <property type="match status" value="1"/>
</dbReference>
<dbReference type="PROSITE" id="PS00302">
    <property type="entry name" value="IF5A_HYPUSINE"/>
    <property type="match status" value="1"/>
</dbReference>
<feature type="chain" id="PRO_0000142493" description="Translation initiation factor 5A">
    <location>
        <begin position="1"/>
        <end position="132"/>
    </location>
</feature>
<feature type="modified residue" description="Hypusine" evidence="1">
    <location>
        <position position="37"/>
    </location>
</feature>
<feature type="strand" evidence="3">
    <location>
        <begin position="2"/>
        <end position="8"/>
    </location>
</feature>
<feature type="helix" evidence="3">
    <location>
        <begin position="9"/>
        <end position="11"/>
    </location>
</feature>
<feature type="strand" evidence="3">
    <location>
        <begin position="16"/>
        <end position="20"/>
    </location>
</feature>
<feature type="strand" evidence="3">
    <location>
        <begin position="23"/>
        <end position="32"/>
    </location>
</feature>
<feature type="strand" evidence="3">
    <location>
        <begin position="37"/>
        <end position="39"/>
    </location>
</feature>
<feature type="strand" evidence="3">
    <location>
        <begin position="42"/>
        <end position="52"/>
    </location>
</feature>
<feature type="strand" evidence="3">
    <location>
        <begin position="55"/>
        <end position="61"/>
    </location>
</feature>
<feature type="strand" evidence="3">
    <location>
        <begin position="64"/>
        <end position="69"/>
    </location>
</feature>
<feature type="strand" evidence="3">
    <location>
        <begin position="71"/>
        <end position="82"/>
    </location>
</feature>
<feature type="strand" evidence="3">
    <location>
        <begin position="85"/>
        <end position="90"/>
    </location>
</feature>
<feature type="turn" evidence="3">
    <location>
        <begin position="91"/>
        <end position="93"/>
    </location>
</feature>
<feature type="strand" evidence="3">
    <location>
        <begin position="96"/>
        <end position="100"/>
    </location>
</feature>
<feature type="strand" evidence="3">
    <location>
        <begin position="113"/>
        <end position="119"/>
    </location>
</feature>
<feature type="strand" evidence="3">
    <location>
        <begin position="122"/>
        <end position="128"/>
    </location>
</feature>
<evidence type="ECO:0000269" key="1">
    <source>
    </source>
</evidence>
<evidence type="ECO:0000305" key="2"/>
<evidence type="ECO:0007829" key="3">
    <source>
        <dbReference type="PDB" id="2EIF"/>
    </source>
</evidence>
<name>IF5A_METJA</name>
<comment type="function">
    <text>Functions by promoting the formation of the first peptide bond.</text>
</comment>
<comment type="subcellular location">
    <subcellularLocation>
        <location>Cytoplasm</location>
    </subcellularLocation>
</comment>
<comment type="similarity">
    <text evidence="2">Belongs to the eIF-5A family.</text>
</comment>
<keyword id="KW-0002">3D-structure</keyword>
<keyword id="KW-0963">Cytoplasm</keyword>
<keyword id="KW-0385">Hypusine</keyword>
<keyword id="KW-0396">Initiation factor</keyword>
<keyword id="KW-0648">Protein biosynthesis</keyword>
<keyword id="KW-1185">Reference proteome</keyword>
<reference key="1">
    <citation type="journal article" date="1996" name="Science">
        <title>Complete genome sequence of the methanogenic archaeon, Methanococcus jannaschii.</title>
        <authorList>
            <person name="Bult C.J."/>
            <person name="White O."/>
            <person name="Olsen G.J."/>
            <person name="Zhou L."/>
            <person name="Fleischmann R.D."/>
            <person name="Sutton G.G."/>
            <person name="Blake J.A."/>
            <person name="FitzGerald L.M."/>
            <person name="Clayton R.A."/>
            <person name="Gocayne J.D."/>
            <person name="Kerlavage A.R."/>
            <person name="Dougherty B.A."/>
            <person name="Tomb J.-F."/>
            <person name="Adams M.D."/>
            <person name="Reich C.I."/>
            <person name="Overbeek R."/>
            <person name="Kirkness E.F."/>
            <person name="Weinstock K.G."/>
            <person name="Merrick J.M."/>
            <person name="Glodek A."/>
            <person name="Scott J.L."/>
            <person name="Geoghagen N.S.M."/>
            <person name="Weidman J.F."/>
            <person name="Fuhrmann J.L."/>
            <person name="Nguyen D."/>
            <person name="Utterback T.R."/>
            <person name="Kelley J.M."/>
            <person name="Peterson J.D."/>
            <person name="Sadow P.W."/>
            <person name="Hanna M.C."/>
            <person name="Cotton M.D."/>
            <person name="Roberts K.M."/>
            <person name="Hurst M.A."/>
            <person name="Kaine B.P."/>
            <person name="Borodovsky M."/>
            <person name="Klenk H.-P."/>
            <person name="Fraser C.M."/>
            <person name="Smith H.O."/>
            <person name="Woese C.R."/>
            <person name="Venter J.C."/>
        </authorList>
    </citation>
    <scope>NUCLEOTIDE SEQUENCE [LARGE SCALE GENOMIC DNA]</scope>
    <source>
        <strain>ATCC 43067 / DSM 2661 / JAL-1 / JCM 10045 / NBRC 100440</strain>
    </source>
</reference>
<reference key="2">
    <citation type="journal article" date="1998" name="Proc. Natl. Acad. Sci. U.S.A.">
        <title>Universally conserved translation initiation factors.</title>
        <authorList>
            <person name="Kyrpides N.C."/>
            <person name="Woese C.R."/>
        </authorList>
    </citation>
    <scope>SIMILARITY</scope>
</reference>
<reference key="3">
    <citation type="journal article" date="1998" name="Proc. Natl. Acad. Sci. U.S.A.">
        <title>Crystal structures of eukaryotic translation initiation factor 5A from Methanococcus jannaschii at 1.8-A resolution.</title>
        <authorList>
            <person name="Kim K.K."/>
            <person name="Hung L.W."/>
            <person name="Yokota H."/>
            <person name="Kim R."/>
            <person name="Kim S.H."/>
        </authorList>
    </citation>
    <scope>X-RAY CRYSTALLOGRAPHY (1.9 ANGSTROMS)</scope>
    <scope>HYPUSINE AT LYS-37</scope>
</reference>
<gene>
    <name type="primary">eif5a</name>
    <name type="ordered locus">MJ1228</name>
</gene>